<keyword id="KW-1003">Cell membrane</keyword>
<keyword id="KW-0961">Cell wall biogenesis/degradation</keyword>
<keyword id="KW-0472">Membrane</keyword>
<keyword id="KW-0812">Transmembrane</keyword>
<keyword id="KW-1133">Transmembrane helix</keyword>
<reference key="1">
    <citation type="submission" date="2009-05" db="EMBL/GenBank/DDBJ databases">
        <title>DOE Joint Genome Institute Mimulus EST project.</title>
        <authorList>
            <person name="Lucas S."/>
            <person name="Rokhsar D."/>
            <person name="Wang M."/>
            <person name="Lindquist E.A."/>
            <person name="Bradshaw H.D. Jr."/>
            <person name="Case A.L."/>
            <person name="Willis J.H."/>
        </authorList>
    </citation>
    <scope>NUCLEOTIDE SEQUENCE [LARGE SCALE MRNA]</scope>
    <source>
        <strain>cv. IM62</strain>
        <tissue>Root</tissue>
    </source>
</reference>
<reference key="2">
    <citation type="journal article" date="2014" name="Plant Physiol.">
        <title>Functional and evolutionary analysis of the CASPARIAN STRIP MEMBRANE DOMAIN PROTEIN family.</title>
        <authorList>
            <person name="Roppolo D."/>
            <person name="Boeckmann B."/>
            <person name="Pfister A."/>
            <person name="Boutet E."/>
            <person name="Rubio M.C."/>
            <person name="Denervaud-Tendon V."/>
            <person name="Vermeer J.E."/>
            <person name="Gheyselinck J."/>
            <person name="Xenarios I."/>
            <person name="Geldner N."/>
        </authorList>
    </citation>
    <scope>GENE FAMILY</scope>
    <scope>NOMENCLATURE</scope>
</reference>
<name>CASP2_ERYGU</name>
<comment type="function">
    <text evidence="1">Regulates membrane-cell wall junctions and localized cell wall deposition. Required for establishment of the Casparian strip membrane domain (CSD) and the subsequent formation of Casparian strips, a cell wall modification of the root endodermis that determines an apoplastic barrier between the intraorganismal apoplasm and the extraorganismal apoplasm and prevents lateral diffusion (By similarity).</text>
</comment>
<comment type="subunit">
    <text evidence="1">Homodimer and heterodimers.</text>
</comment>
<comment type="subcellular location">
    <subcellularLocation>
        <location evidence="1">Cell membrane</location>
        <topology evidence="1">Multi-pass membrane protein</topology>
    </subcellularLocation>
    <text evidence="1">Very restricted localization following a belt shape within the plasma membrane which coincides with the position of the Casparian strip membrane domain in the root endodermis.</text>
</comment>
<comment type="similarity">
    <text evidence="4">Belongs to the Casparian strip membrane proteins (CASP) family.</text>
</comment>
<evidence type="ECO:0000250" key="1"/>
<evidence type="ECO:0000255" key="2"/>
<evidence type="ECO:0000256" key="3">
    <source>
        <dbReference type="SAM" id="MobiDB-lite"/>
    </source>
</evidence>
<evidence type="ECO:0000305" key="4"/>
<feature type="chain" id="PRO_0000417785" description="Casparian strip membrane protein 2">
    <location>
        <begin position="1"/>
        <end position="221"/>
    </location>
</feature>
<feature type="topological domain" description="Cytoplasmic" evidence="2">
    <location>
        <begin position="1"/>
        <end position="41"/>
    </location>
</feature>
<feature type="transmembrane region" description="Helical" evidence="2">
    <location>
        <begin position="42"/>
        <end position="62"/>
    </location>
</feature>
<feature type="topological domain" description="Extracellular" evidence="2">
    <location>
        <begin position="63"/>
        <end position="89"/>
    </location>
</feature>
<feature type="transmembrane region" description="Helical" evidence="2">
    <location>
        <begin position="90"/>
        <end position="110"/>
    </location>
</feature>
<feature type="topological domain" description="Cytoplasmic" evidence="2">
    <location>
        <begin position="111"/>
        <end position="131"/>
    </location>
</feature>
<feature type="transmembrane region" description="Helical" evidence="2">
    <location>
        <begin position="132"/>
        <end position="152"/>
    </location>
</feature>
<feature type="topological domain" description="Extracellular" evidence="2">
    <location>
        <begin position="153"/>
        <end position="221"/>
    </location>
</feature>
<feature type="region of interest" description="Disordered" evidence="3">
    <location>
        <begin position="1"/>
        <end position="21"/>
    </location>
</feature>
<protein>
    <recommendedName>
        <fullName>Casparian strip membrane protein 2</fullName>
        <shortName>MgCASP2</shortName>
    </recommendedName>
</protein>
<sequence length="221" mass="23598">MEKSEATTIEIGETSRESKGKTPLLAEVEQTARTAGSYRRGVAIFDLILRVSAATSALAATITMGTTEQTLPFFTQFFQFQASYDDLPAFTFFVIALSIVTGYLVLSVPFSVVCIAQPLAAVPRLLLIVCDTLTVTLATAAASSSAAIVYLAHNGNADANWLAICQQFGDFCQRVSGGGGGVVRGGGSAHIHGGALRSRPEETLTDGVDVIHYWDRRWCEI</sequence>
<organism>
    <name type="scientific">Erythranthe guttata</name>
    <name type="common">Yellow monkey flower</name>
    <name type="synonym">Mimulus guttatus</name>
    <dbReference type="NCBI Taxonomy" id="4155"/>
    <lineage>
        <taxon>Eukaryota</taxon>
        <taxon>Viridiplantae</taxon>
        <taxon>Streptophyta</taxon>
        <taxon>Embryophyta</taxon>
        <taxon>Tracheophyta</taxon>
        <taxon>Spermatophyta</taxon>
        <taxon>Magnoliopsida</taxon>
        <taxon>eudicotyledons</taxon>
        <taxon>Gunneridae</taxon>
        <taxon>Pentapetalae</taxon>
        <taxon>asterids</taxon>
        <taxon>lamiids</taxon>
        <taxon>Lamiales</taxon>
        <taxon>Phrymaceae</taxon>
        <taxon>Erythranthe</taxon>
    </lineage>
</organism>
<accession>P0DI51</accession>
<proteinExistence type="evidence at transcript level"/>
<dbReference type="EMBL" id="GR006420">
    <property type="status" value="NOT_ANNOTATED_CDS"/>
    <property type="molecule type" value="mRNA"/>
</dbReference>
<dbReference type="eggNOG" id="ENOG502RYTF">
    <property type="taxonomic scope" value="Eukaryota"/>
</dbReference>
<dbReference type="GO" id="GO:0005886">
    <property type="term" value="C:plasma membrane"/>
    <property type="evidence" value="ECO:0007669"/>
    <property type="project" value="UniProtKB-SubCell"/>
</dbReference>
<dbReference type="GO" id="GO:0071555">
    <property type="term" value="P:cell wall organization"/>
    <property type="evidence" value="ECO:0007669"/>
    <property type="project" value="UniProtKB-KW"/>
</dbReference>
<dbReference type="InterPro" id="IPR006459">
    <property type="entry name" value="CASP/CASPL"/>
</dbReference>
<dbReference type="InterPro" id="IPR006702">
    <property type="entry name" value="CASP_dom"/>
</dbReference>
<dbReference type="InterPro" id="IPR044173">
    <property type="entry name" value="CASPL"/>
</dbReference>
<dbReference type="NCBIfam" id="TIGR01569">
    <property type="entry name" value="A_tha_TIGR01569"/>
    <property type="match status" value="1"/>
</dbReference>
<dbReference type="PANTHER" id="PTHR36488:SF11">
    <property type="entry name" value="CASP-LIKE PROTEIN"/>
    <property type="match status" value="1"/>
</dbReference>
<dbReference type="PANTHER" id="PTHR36488">
    <property type="entry name" value="CASP-LIKE PROTEIN 1U1"/>
    <property type="match status" value="1"/>
</dbReference>
<dbReference type="Pfam" id="PF04535">
    <property type="entry name" value="CASP_dom"/>
    <property type="match status" value="1"/>
</dbReference>